<name>FB184_ARATH</name>
<accession>Q9LV45</accession>
<dbReference type="EMBL" id="AB020746">
    <property type="protein sequence ID" value="BAB02010.1"/>
    <property type="molecule type" value="Genomic_DNA"/>
</dbReference>
<dbReference type="EMBL" id="CP002686">
    <property type="protein sequence ID" value="AEE76926.1"/>
    <property type="molecule type" value="Genomic_DNA"/>
</dbReference>
<dbReference type="RefSeq" id="NP_189101.1">
    <property type="nucleotide sequence ID" value="NM_113369.1"/>
</dbReference>
<dbReference type="BioGRID" id="7385">
    <property type="interactions" value="5"/>
</dbReference>
<dbReference type="FunCoup" id="Q9LV45">
    <property type="interactions" value="2"/>
</dbReference>
<dbReference type="STRING" id="3702.Q9LV45"/>
<dbReference type="PaxDb" id="3702-AT3G24580.1"/>
<dbReference type="EnsemblPlants" id="AT3G24580.1">
    <property type="protein sequence ID" value="AT3G24580.1"/>
    <property type="gene ID" value="AT3G24580"/>
</dbReference>
<dbReference type="GeneID" id="822054"/>
<dbReference type="Gramene" id="AT3G24580.1">
    <property type="protein sequence ID" value="AT3G24580.1"/>
    <property type="gene ID" value="AT3G24580"/>
</dbReference>
<dbReference type="KEGG" id="ath:AT3G24580"/>
<dbReference type="Araport" id="AT3G24580"/>
<dbReference type="TAIR" id="AT3G24580"/>
<dbReference type="HOGENOM" id="CLU_034692_0_0_1"/>
<dbReference type="InParanoid" id="Q9LV45"/>
<dbReference type="OMA" id="CIKPEGE"/>
<dbReference type="PhylomeDB" id="Q9LV45"/>
<dbReference type="PRO" id="PR:Q9LV45"/>
<dbReference type="Proteomes" id="UP000006548">
    <property type="component" value="Chromosome 3"/>
</dbReference>
<dbReference type="ExpressionAtlas" id="Q9LV45">
    <property type="expression patterns" value="baseline and differential"/>
</dbReference>
<dbReference type="Gene3D" id="1.20.1280.50">
    <property type="match status" value="1"/>
</dbReference>
<dbReference type="InterPro" id="IPR050233">
    <property type="entry name" value="A_thaliana_F-box"/>
</dbReference>
<dbReference type="InterPro" id="IPR006527">
    <property type="entry name" value="F-box-assoc_dom_typ1"/>
</dbReference>
<dbReference type="InterPro" id="IPR017451">
    <property type="entry name" value="F-box-assoc_interact_dom"/>
</dbReference>
<dbReference type="InterPro" id="IPR036047">
    <property type="entry name" value="F-box-like_dom_sf"/>
</dbReference>
<dbReference type="InterPro" id="IPR001810">
    <property type="entry name" value="F-box_dom"/>
</dbReference>
<dbReference type="InterPro" id="IPR011043">
    <property type="entry name" value="Gal_Oxase/kelch_b-propeller"/>
</dbReference>
<dbReference type="NCBIfam" id="TIGR01640">
    <property type="entry name" value="F_box_assoc_1"/>
    <property type="match status" value="1"/>
</dbReference>
<dbReference type="PANTHER" id="PTHR47993:SF289">
    <property type="entry name" value="F-BOX ASSOCIATED UBIQUITINATION EFFECTOR FAMILY PROTEIN"/>
    <property type="match status" value="1"/>
</dbReference>
<dbReference type="PANTHER" id="PTHR47993">
    <property type="entry name" value="OS09G0372900 PROTEIN-RELATED"/>
    <property type="match status" value="1"/>
</dbReference>
<dbReference type="Pfam" id="PF00646">
    <property type="entry name" value="F-box"/>
    <property type="match status" value="1"/>
</dbReference>
<dbReference type="Pfam" id="PF07734">
    <property type="entry name" value="FBA_1"/>
    <property type="match status" value="1"/>
</dbReference>
<dbReference type="SMART" id="SM00256">
    <property type="entry name" value="FBOX"/>
    <property type="match status" value="1"/>
</dbReference>
<dbReference type="SUPFAM" id="SSF81383">
    <property type="entry name" value="F-box domain"/>
    <property type="match status" value="1"/>
</dbReference>
<dbReference type="SUPFAM" id="SSF50965">
    <property type="entry name" value="Galactose oxidase, central domain"/>
    <property type="match status" value="1"/>
</dbReference>
<dbReference type="PROSITE" id="PS50181">
    <property type="entry name" value="FBOX"/>
    <property type="match status" value="1"/>
</dbReference>
<sequence length="378" mass="43803">MTKMSNLPNDLAEEVLSRVSLTSLRNVRLTCKDWNTLSKGESFAKNHLGYQAIVAAKEKEFMMVLMMDFRVYLIRVNVHNDIESCIKPEGELISLGDEVDVSQVFHCDGLLLCITEDNEDNAKVVLWNPYWGQTRWIESTNNFHKLDMYTYALGYKKSSKSSRSYKILRFIDFSPTCSEFKIYNINSDSWKVLDVSPDWKIDSYIRGVSLKGNTYWIARERHGYGHTFLVCFDFTRERFRSRLPLPSQPCVLDTVSLSSVREEQLAVLFQCSSTLEMQIWVTTKIEPNAVLWNSKVFLAVDMHSLKFQFQVRASSFFIDEEKRVVVVFDKEKRYLASSRNKAYIVGVDGTWEQVDLGMSVDKFVYPLVCSYVPSLVHF</sequence>
<evidence type="ECO:0000255" key="1">
    <source>
        <dbReference type="PROSITE-ProRule" id="PRU00080"/>
    </source>
</evidence>
<organism>
    <name type="scientific">Arabidopsis thaliana</name>
    <name type="common">Mouse-ear cress</name>
    <dbReference type="NCBI Taxonomy" id="3702"/>
    <lineage>
        <taxon>Eukaryota</taxon>
        <taxon>Viridiplantae</taxon>
        <taxon>Streptophyta</taxon>
        <taxon>Embryophyta</taxon>
        <taxon>Tracheophyta</taxon>
        <taxon>Spermatophyta</taxon>
        <taxon>Magnoliopsida</taxon>
        <taxon>eudicotyledons</taxon>
        <taxon>Gunneridae</taxon>
        <taxon>Pentapetalae</taxon>
        <taxon>rosids</taxon>
        <taxon>malvids</taxon>
        <taxon>Brassicales</taxon>
        <taxon>Brassicaceae</taxon>
        <taxon>Camelineae</taxon>
        <taxon>Arabidopsis</taxon>
    </lineage>
</organism>
<feature type="chain" id="PRO_0000283454" description="Putative F-box protein At3g24580">
    <location>
        <begin position="1"/>
        <end position="378"/>
    </location>
</feature>
<feature type="domain" description="F-box" evidence="1">
    <location>
        <begin position="1"/>
        <end position="47"/>
    </location>
</feature>
<reference key="1">
    <citation type="journal article" date="2000" name="DNA Res.">
        <title>Structural analysis of Arabidopsis thaliana chromosome 3. II. Sequence features of the 4,251,695 bp regions covered by 90 P1, TAC and BAC clones.</title>
        <authorList>
            <person name="Kaneko T."/>
            <person name="Katoh T."/>
            <person name="Sato S."/>
            <person name="Nakamura Y."/>
            <person name="Asamizu E."/>
            <person name="Tabata S."/>
        </authorList>
    </citation>
    <scope>NUCLEOTIDE SEQUENCE [LARGE SCALE GENOMIC DNA]</scope>
    <source>
        <strain>cv. Columbia</strain>
    </source>
</reference>
<reference key="2">
    <citation type="journal article" date="2017" name="Plant J.">
        <title>Araport11: a complete reannotation of the Arabidopsis thaliana reference genome.</title>
        <authorList>
            <person name="Cheng C.Y."/>
            <person name="Krishnakumar V."/>
            <person name="Chan A.P."/>
            <person name="Thibaud-Nissen F."/>
            <person name="Schobel S."/>
            <person name="Town C.D."/>
        </authorList>
    </citation>
    <scope>GENOME REANNOTATION</scope>
    <source>
        <strain>cv. Columbia</strain>
    </source>
</reference>
<protein>
    <recommendedName>
        <fullName>Putative F-box protein At3g24580</fullName>
    </recommendedName>
</protein>
<keyword id="KW-1185">Reference proteome</keyword>
<gene>
    <name type="ordered locus">At3g24580</name>
    <name type="ORF">MOB24.16</name>
</gene>
<proteinExistence type="predicted"/>